<organism>
    <name type="scientific">Gossypium hirsutum</name>
    <name type="common">Upland cotton</name>
    <name type="synonym">Gossypium mexicanum</name>
    <dbReference type="NCBI Taxonomy" id="3635"/>
    <lineage>
        <taxon>Eukaryota</taxon>
        <taxon>Viridiplantae</taxon>
        <taxon>Streptophyta</taxon>
        <taxon>Embryophyta</taxon>
        <taxon>Tracheophyta</taxon>
        <taxon>Spermatophyta</taxon>
        <taxon>Magnoliopsida</taxon>
        <taxon>eudicotyledons</taxon>
        <taxon>Gunneridae</taxon>
        <taxon>Pentapetalae</taxon>
        <taxon>rosids</taxon>
        <taxon>malvids</taxon>
        <taxon>Malvales</taxon>
        <taxon>Malvaceae</taxon>
        <taxon>Malvoideae</taxon>
        <taxon>Gossypium</taxon>
    </lineage>
</organism>
<keyword id="KW-0007">Acetylation</keyword>
<keyword id="KW-0113">Calvin cycle</keyword>
<keyword id="KW-0120">Carbon dioxide fixation</keyword>
<keyword id="KW-0150">Chloroplast</keyword>
<keyword id="KW-1015">Disulfide bond</keyword>
<keyword id="KW-0456">Lyase</keyword>
<keyword id="KW-0460">Magnesium</keyword>
<keyword id="KW-0479">Metal-binding</keyword>
<keyword id="KW-0488">Methylation</keyword>
<keyword id="KW-0503">Monooxygenase</keyword>
<keyword id="KW-0560">Oxidoreductase</keyword>
<keyword id="KW-0601">Photorespiration</keyword>
<keyword id="KW-0602">Photosynthesis</keyword>
<keyword id="KW-0934">Plastid</keyword>
<keyword id="KW-1185">Reference proteome</keyword>
<accession>P14958</accession>
<accession>Q2L916</accession>
<accession>Q42769</accession>
<proteinExistence type="inferred from homology"/>
<protein>
    <recommendedName>
        <fullName evidence="1">Ribulose bisphosphate carboxylase large chain</fullName>
        <shortName evidence="1">RuBisCO large subunit</shortName>
        <ecNumber evidence="1">4.1.1.39</ecNumber>
    </recommendedName>
</protein>
<sequence length="475" mass="52701">MSPQTETKASVGFKAGVKEYKLTYYTPEYEVKDTDILAAFRVTPQPGVPPEEAGAAVAAESSTGTWTTVWTDGLTSLDRYKGRCYDIEPVPGEEDQYICYVAYPLDLFEEGSVTNMFTSIVGNVFGFKALRALRLEDLRVPTAYIKTFQGPPHGIQVERDKLNKYGRPLLGCTIKPKLGLSAKNYGRAVYECLRGGLDFTKDDENVNSQPFMRWRDRFLFCAEAIFKSQAETGEIKGHYLNATAGTCEEMIKRAMCARELGVPIVMHDYLTGGFTANTSLAHYCRDNGLLLHIHRAMHAVIDRQKNHGMHFRVLAKALRMSGGDHIHAGTVVGKLEGERDITLGFVDLLRDDFIEKDRSRGIYFTQDWVSMPGVLPVASGGIHVWHMPALTEIFGDDSVLQFGGGTLGHPWGNAPGAVANRVALEACVQARNEGRDLAREGNEIIREASKWSPELAAACEVWKAIKFEFEAMDTL</sequence>
<evidence type="ECO:0000255" key="1">
    <source>
        <dbReference type="HAMAP-Rule" id="MF_01338"/>
    </source>
</evidence>
<evidence type="ECO:0000305" key="2"/>
<reference key="1">
    <citation type="journal article" date="1990" name="Nucleic Acids Res.">
        <title>Nucleotide sequence of the chloroplast rbcL gene from cotton Gossypium hirsutum.</title>
        <authorList>
            <person name="Gulov M.K."/>
            <person name="Ulmasov T.N."/>
            <person name="Aliev K.A."/>
            <person name="Andrianov V.M."/>
            <person name="Piruzian E.S."/>
        </authorList>
    </citation>
    <scope>NUCLEOTIDE SEQUENCE [GENOMIC DNA]</scope>
    <source>
        <strain>cv. 108-F</strain>
    </source>
</reference>
<reference key="2">
    <citation type="journal article" date="2006" name="BMC Genomics">
        <title>The complete chloroplast genome sequence of Gossypium hirsutum: organization and phylogenetic relationships to other angiosperms.</title>
        <authorList>
            <person name="Lee S.-B."/>
            <person name="Kaittanis C."/>
            <person name="Jansen R.K."/>
            <person name="Hostetler J.B."/>
            <person name="Tallon L.J."/>
            <person name="Town C.D."/>
            <person name="Daniell H."/>
        </authorList>
    </citation>
    <scope>NUCLEOTIDE SEQUENCE [LARGE SCALE GENOMIC DNA]</scope>
    <source>
        <strain>cv. Coker 310FR</strain>
    </source>
</reference>
<reference key="3">
    <citation type="journal article" date="1992" name="Syst. Bot.">
        <title>Evolutionary relationships of the Caryophyllidae based on comparative rbcL sequences.</title>
        <authorList>
            <person name="Giannasi D.E."/>
            <person name="Zurawski G."/>
            <person name="Learn G.H."/>
            <person name="Clegg M.T."/>
        </authorList>
        <dbReference type="AGRICOLA" id="IND92012379"/>
    </citation>
    <scope>NUCLEOTIDE SEQUENCE [GENOMIC DNA] OF 1-469</scope>
</reference>
<name>RBL_GOSHI</name>
<geneLocation type="chloroplast"/>
<dbReference type="EC" id="4.1.1.39" evidence="1"/>
<dbReference type="EMBL" id="X15886">
    <property type="protein sequence ID" value="CAA33896.1"/>
    <property type="molecule type" value="Genomic_DNA"/>
</dbReference>
<dbReference type="EMBL" id="DQ345959">
    <property type="protein sequence ID" value="ABC73636.1"/>
    <property type="molecule type" value="Genomic_DNA"/>
</dbReference>
<dbReference type="EMBL" id="M77700">
    <property type="protein sequence ID" value="AAA33068.1"/>
    <property type="molecule type" value="Genomic_DNA"/>
</dbReference>
<dbReference type="PIR" id="S07582">
    <property type="entry name" value="RKCNLU"/>
</dbReference>
<dbReference type="RefSeq" id="YP_538943.1">
    <property type="nucleotide sequence ID" value="NC_007944.1"/>
</dbReference>
<dbReference type="SMR" id="P14958"/>
<dbReference type="GeneID" id="3989157"/>
<dbReference type="KEGG" id="ghi:3989157"/>
<dbReference type="OrthoDB" id="57004at41938"/>
<dbReference type="Proteomes" id="UP000189702">
    <property type="component" value="Chloroplast Pltd"/>
</dbReference>
<dbReference type="GO" id="GO:0009507">
    <property type="term" value="C:chloroplast"/>
    <property type="evidence" value="ECO:0007669"/>
    <property type="project" value="UniProtKB-SubCell"/>
</dbReference>
<dbReference type="GO" id="GO:0000287">
    <property type="term" value="F:magnesium ion binding"/>
    <property type="evidence" value="ECO:0007669"/>
    <property type="project" value="UniProtKB-UniRule"/>
</dbReference>
<dbReference type="GO" id="GO:0004497">
    <property type="term" value="F:monooxygenase activity"/>
    <property type="evidence" value="ECO:0007669"/>
    <property type="project" value="UniProtKB-KW"/>
</dbReference>
<dbReference type="GO" id="GO:0016984">
    <property type="term" value="F:ribulose-bisphosphate carboxylase activity"/>
    <property type="evidence" value="ECO:0007669"/>
    <property type="project" value="UniProtKB-UniRule"/>
</dbReference>
<dbReference type="GO" id="GO:0009853">
    <property type="term" value="P:photorespiration"/>
    <property type="evidence" value="ECO:0007669"/>
    <property type="project" value="UniProtKB-KW"/>
</dbReference>
<dbReference type="GO" id="GO:0019253">
    <property type="term" value="P:reductive pentose-phosphate cycle"/>
    <property type="evidence" value="ECO:0007669"/>
    <property type="project" value="UniProtKB-UniRule"/>
</dbReference>
<dbReference type="CDD" id="cd08212">
    <property type="entry name" value="RuBisCO_large_I"/>
    <property type="match status" value="1"/>
</dbReference>
<dbReference type="FunFam" id="3.20.20.110:FF:000001">
    <property type="entry name" value="Ribulose bisphosphate carboxylase large chain"/>
    <property type="match status" value="1"/>
</dbReference>
<dbReference type="FunFam" id="3.30.70.150:FF:000001">
    <property type="entry name" value="Ribulose bisphosphate carboxylase large chain"/>
    <property type="match status" value="1"/>
</dbReference>
<dbReference type="Gene3D" id="3.20.20.110">
    <property type="entry name" value="Ribulose bisphosphate carboxylase, large subunit, C-terminal domain"/>
    <property type="match status" value="1"/>
</dbReference>
<dbReference type="Gene3D" id="3.30.70.150">
    <property type="entry name" value="RuBisCO large subunit, N-terminal domain"/>
    <property type="match status" value="1"/>
</dbReference>
<dbReference type="HAMAP" id="MF_01338">
    <property type="entry name" value="RuBisCO_L_type1"/>
    <property type="match status" value="1"/>
</dbReference>
<dbReference type="InterPro" id="IPR033966">
    <property type="entry name" value="RuBisCO"/>
</dbReference>
<dbReference type="InterPro" id="IPR020878">
    <property type="entry name" value="RuBisCo_large_chain_AS"/>
</dbReference>
<dbReference type="InterPro" id="IPR000685">
    <property type="entry name" value="RuBisCO_lsu_C"/>
</dbReference>
<dbReference type="InterPro" id="IPR036376">
    <property type="entry name" value="RuBisCO_lsu_C_sf"/>
</dbReference>
<dbReference type="InterPro" id="IPR017443">
    <property type="entry name" value="RuBisCO_lsu_fd_N"/>
</dbReference>
<dbReference type="InterPro" id="IPR036422">
    <property type="entry name" value="RuBisCO_lsu_N_sf"/>
</dbReference>
<dbReference type="InterPro" id="IPR020888">
    <property type="entry name" value="RuBisCO_lsuI"/>
</dbReference>
<dbReference type="NCBIfam" id="NF003252">
    <property type="entry name" value="PRK04208.1"/>
    <property type="match status" value="1"/>
</dbReference>
<dbReference type="PANTHER" id="PTHR42704">
    <property type="entry name" value="RIBULOSE BISPHOSPHATE CARBOXYLASE"/>
    <property type="match status" value="1"/>
</dbReference>
<dbReference type="PANTHER" id="PTHR42704:SF15">
    <property type="entry name" value="RIBULOSE BISPHOSPHATE CARBOXYLASE LARGE CHAIN"/>
    <property type="match status" value="1"/>
</dbReference>
<dbReference type="Pfam" id="PF00016">
    <property type="entry name" value="RuBisCO_large"/>
    <property type="match status" value="1"/>
</dbReference>
<dbReference type="Pfam" id="PF02788">
    <property type="entry name" value="RuBisCO_large_N"/>
    <property type="match status" value="1"/>
</dbReference>
<dbReference type="SFLD" id="SFLDG01052">
    <property type="entry name" value="RuBisCO"/>
    <property type="match status" value="1"/>
</dbReference>
<dbReference type="SFLD" id="SFLDS00014">
    <property type="entry name" value="RuBisCO"/>
    <property type="match status" value="1"/>
</dbReference>
<dbReference type="SFLD" id="SFLDG00301">
    <property type="entry name" value="RuBisCO-like_proteins"/>
    <property type="match status" value="1"/>
</dbReference>
<dbReference type="SUPFAM" id="SSF51649">
    <property type="entry name" value="RuBisCo, C-terminal domain"/>
    <property type="match status" value="1"/>
</dbReference>
<dbReference type="SUPFAM" id="SSF54966">
    <property type="entry name" value="RuBisCO, large subunit, small (N-terminal) domain"/>
    <property type="match status" value="1"/>
</dbReference>
<dbReference type="PROSITE" id="PS00157">
    <property type="entry name" value="RUBISCO_LARGE"/>
    <property type="match status" value="1"/>
</dbReference>
<feature type="propeptide" id="PRO_0000031245" evidence="1">
    <location>
        <begin position="1"/>
        <end position="2"/>
    </location>
</feature>
<feature type="chain" id="PRO_0000031246" description="Ribulose bisphosphate carboxylase large chain">
    <location>
        <begin position="3"/>
        <end position="475"/>
    </location>
</feature>
<feature type="active site" description="Proton acceptor" evidence="1">
    <location>
        <position position="175"/>
    </location>
</feature>
<feature type="active site" description="Proton acceptor" evidence="1">
    <location>
        <position position="294"/>
    </location>
</feature>
<feature type="binding site" description="in homodimeric partner" evidence="1">
    <location>
        <position position="123"/>
    </location>
    <ligand>
        <name>substrate</name>
    </ligand>
</feature>
<feature type="binding site" evidence="1">
    <location>
        <position position="173"/>
    </location>
    <ligand>
        <name>substrate</name>
    </ligand>
</feature>
<feature type="binding site" evidence="1">
    <location>
        <position position="177"/>
    </location>
    <ligand>
        <name>substrate</name>
    </ligand>
</feature>
<feature type="binding site" description="via carbamate group" evidence="1">
    <location>
        <position position="201"/>
    </location>
    <ligand>
        <name>Mg(2+)</name>
        <dbReference type="ChEBI" id="CHEBI:18420"/>
    </ligand>
</feature>
<feature type="binding site" evidence="1">
    <location>
        <position position="203"/>
    </location>
    <ligand>
        <name>Mg(2+)</name>
        <dbReference type="ChEBI" id="CHEBI:18420"/>
    </ligand>
</feature>
<feature type="binding site" evidence="1">
    <location>
        <position position="204"/>
    </location>
    <ligand>
        <name>Mg(2+)</name>
        <dbReference type="ChEBI" id="CHEBI:18420"/>
    </ligand>
</feature>
<feature type="binding site" evidence="1">
    <location>
        <position position="295"/>
    </location>
    <ligand>
        <name>substrate</name>
    </ligand>
</feature>
<feature type="binding site" evidence="1">
    <location>
        <position position="327"/>
    </location>
    <ligand>
        <name>substrate</name>
    </ligand>
</feature>
<feature type="binding site" evidence="1">
    <location>
        <position position="379"/>
    </location>
    <ligand>
        <name>substrate</name>
    </ligand>
</feature>
<feature type="site" description="Transition state stabilizer" evidence="1">
    <location>
        <position position="334"/>
    </location>
</feature>
<feature type="modified residue" description="N-acetylproline" evidence="1">
    <location>
        <position position="3"/>
    </location>
</feature>
<feature type="modified residue" description="N6,N6,N6-trimethyllysine" evidence="1">
    <location>
        <position position="14"/>
    </location>
</feature>
<feature type="modified residue" description="N6-carboxylysine" evidence="1">
    <location>
        <position position="201"/>
    </location>
</feature>
<feature type="disulfide bond" description="Interchain; in linked form" evidence="1">
    <location>
        <position position="247"/>
    </location>
</feature>
<feature type="sequence conflict" description="In Ref. 1; CAA33896." evidence="2" ref="1">
    <original>S</original>
    <variation>R</variation>
    <location>
        <position position="359"/>
    </location>
</feature>
<feature type="sequence conflict" description="In Ref. 2; ABC73636." evidence="2" ref="2">
    <original>EAMDT</original>
    <variation>DAVDKLDKVEK</variation>
    <location>
        <begin position="470"/>
        <end position="474"/>
    </location>
</feature>
<gene>
    <name evidence="1" type="primary">rbcL</name>
</gene>
<comment type="function">
    <text evidence="1">RuBisCO catalyzes two reactions: the carboxylation of D-ribulose 1,5-bisphosphate, the primary event in carbon dioxide fixation, as well as the oxidative fragmentation of the pentose substrate in the photorespiration process. Both reactions occur simultaneously and in competition at the same active site.</text>
</comment>
<comment type="catalytic activity">
    <reaction evidence="1">
        <text>2 (2R)-3-phosphoglycerate + 2 H(+) = D-ribulose 1,5-bisphosphate + CO2 + H2O</text>
        <dbReference type="Rhea" id="RHEA:23124"/>
        <dbReference type="ChEBI" id="CHEBI:15377"/>
        <dbReference type="ChEBI" id="CHEBI:15378"/>
        <dbReference type="ChEBI" id="CHEBI:16526"/>
        <dbReference type="ChEBI" id="CHEBI:57870"/>
        <dbReference type="ChEBI" id="CHEBI:58272"/>
        <dbReference type="EC" id="4.1.1.39"/>
    </reaction>
</comment>
<comment type="catalytic activity">
    <reaction evidence="1">
        <text>D-ribulose 1,5-bisphosphate + O2 = 2-phosphoglycolate + (2R)-3-phosphoglycerate + 2 H(+)</text>
        <dbReference type="Rhea" id="RHEA:36631"/>
        <dbReference type="ChEBI" id="CHEBI:15378"/>
        <dbReference type="ChEBI" id="CHEBI:15379"/>
        <dbReference type="ChEBI" id="CHEBI:57870"/>
        <dbReference type="ChEBI" id="CHEBI:58033"/>
        <dbReference type="ChEBI" id="CHEBI:58272"/>
    </reaction>
</comment>
<comment type="cofactor">
    <cofactor evidence="1">
        <name>Mg(2+)</name>
        <dbReference type="ChEBI" id="CHEBI:18420"/>
    </cofactor>
    <text evidence="1">Binds 1 Mg(2+) ion per subunit.</text>
</comment>
<comment type="subunit">
    <text evidence="1">Heterohexadecamer of 8 large chains and 8 small chains; disulfide-linked. The disulfide link is formed within the large subunit homodimers.</text>
</comment>
<comment type="subcellular location">
    <subcellularLocation>
        <location>Plastid</location>
        <location>Chloroplast</location>
    </subcellularLocation>
</comment>
<comment type="PTM">
    <text evidence="1">The disulfide bond which can form in the large chain dimeric partners within the hexadecamer appears to be associated with oxidative stress and protein turnover.</text>
</comment>
<comment type="miscellaneous">
    <text evidence="1">The basic functional RuBisCO is composed of a large chain homodimer in a 'head-to-tail' conformation. In form I RuBisCO this homodimer is arranged in a barrel-like tetramer with the small subunits forming a tetrameric 'cap' on each end of the 'barrel'.</text>
</comment>
<comment type="similarity">
    <text evidence="1">Belongs to the RuBisCO large chain family. Type I subfamily.</text>
</comment>